<dbReference type="EMBL" id="CP000422">
    <property type="protein sequence ID" value="ABJ67908.1"/>
    <property type="molecule type" value="Genomic_DNA"/>
</dbReference>
<dbReference type="RefSeq" id="WP_011673298.1">
    <property type="nucleotide sequence ID" value="NC_008525.1"/>
</dbReference>
<dbReference type="SMR" id="Q03FW4"/>
<dbReference type="STRING" id="278197.PEPE_0848"/>
<dbReference type="GeneID" id="33061481"/>
<dbReference type="KEGG" id="ppe:PEPE_0848"/>
<dbReference type="eggNOG" id="COG0806">
    <property type="taxonomic scope" value="Bacteria"/>
</dbReference>
<dbReference type="HOGENOM" id="CLU_077636_3_1_9"/>
<dbReference type="OrthoDB" id="9810331at2"/>
<dbReference type="Proteomes" id="UP000000773">
    <property type="component" value="Chromosome"/>
</dbReference>
<dbReference type="GO" id="GO:0005737">
    <property type="term" value="C:cytoplasm"/>
    <property type="evidence" value="ECO:0007669"/>
    <property type="project" value="UniProtKB-SubCell"/>
</dbReference>
<dbReference type="GO" id="GO:0005840">
    <property type="term" value="C:ribosome"/>
    <property type="evidence" value="ECO:0007669"/>
    <property type="project" value="InterPro"/>
</dbReference>
<dbReference type="GO" id="GO:0043022">
    <property type="term" value="F:ribosome binding"/>
    <property type="evidence" value="ECO:0007669"/>
    <property type="project" value="InterPro"/>
</dbReference>
<dbReference type="GO" id="GO:0042274">
    <property type="term" value="P:ribosomal small subunit biogenesis"/>
    <property type="evidence" value="ECO:0007669"/>
    <property type="project" value="UniProtKB-UniRule"/>
</dbReference>
<dbReference type="GO" id="GO:0006364">
    <property type="term" value="P:rRNA processing"/>
    <property type="evidence" value="ECO:0007669"/>
    <property type="project" value="UniProtKB-UniRule"/>
</dbReference>
<dbReference type="Gene3D" id="2.30.30.240">
    <property type="entry name" value="PRC-barrel domain"/>
    <property type="match status" value="1"/>
</dbReference>
<dbReference type="Gene3D" id="2.40.30.60">
    <property type="entry name" value="RimM"/>
    <property type="match status" value="1"/>
</dbReference>
<dbReference type="HAMAP" id="MF_00014">
    <property type="entry name" value="Ribosome_mat_RimM"/>
    <property type="match status" value="1"/>
</dbReference>
<dbReference type="InterPro" id="IPR011033">
    <property type="entry name" value="PRC_barrel-like_sf"/>
</dbReference>
<dbReference type="InterPro" id="IPR056792">
    <property type="entry name" value="PRC_RimM"/>
</dbReference>
<dbReference type="InterPro" id="IPR011961">
    <property type="entry name" value="RimM"/>
</dbReference>
<dbReference type="InterPro" id="IPR002676">
    <property type="entry name" value="RimM_N"/>
</dbReference>
<dbReference type="InterPro" id="IPR036976">
    <property type="entry name" value="RimM_N_sf"/>
</dbReference>
<dbReference type="InterPro" id="IPR009000">
    <property type="entry name" value="Transl_B-barrel_sf"/>
</dbReference>
<dbReference type="NCBIfam" id="TIGR02273">
    <property type="entry name" value="16S_RimM"/>
    <property type="match status" value="1"/>
</dbReference>
<dbReference type="PANTHER" id="PTHR33692">
    <property type="entry name" value="RIBOSOME MATURATION FACTOR RIMM"/>
    <property type="match status" value="1"/>
</dbReference>
<dbReference type="PANTHER" id="PTHR33692:SF1">
    <property type="entry name" value="RIBOSOME MATURATION FACTOR RIMM"/>
    <property type="match status" value="1"/>
</dbReference>
<dbReference type="Pfam" id="PF24986">
    <property type="entry name" value="PRC_RimM"/>
    <property type="match status" value="1"/>
</dbReference>
<dbReference type="Pfam" id="PF01782">
    <property type="entry name" value="RimM"/>
    <property type="match status" value="1"/>
</dbReference>
<dbReference type="SUPFAM" id="SSF50346">
    <property type="entry name" value="PRC-barrel domain"/>
    <property type="match status" value="1"/>
</dbReference>
<dbReference type="SUPFAM" id="SSF50447">
    <property type="entry name" value="Translation proteins"/>
    <property type="match status" value="1"/>
</dbReference>
<accession>Q03FW4</accession>
<proteinExistence type="inferred from homology"/>
<sequence length="171" mass="19451">MNYFNVAKIVNTRGLRGELKVISYTDFPEERFKSGAELQIFKTEKDEVPVQTVTVKNAKEYKGSFIVTLEGMNSINDVEKFKGMILKVEEDQLQDLEEGEFYLHQIIGLDVIENDQKIGTIKEVLSYGPNDVWVVKRPNQNDLLLPYLKDVILNVDLEQGAVQVSVPEGLD</sequence>
<comment type="function">
    <text evidence="1">An accessory protein needed during the final step in the assembly of 30S ribosomal subunit, possibly for assembly of the head region. Essential for efficient processing of 16S rRNA. May be needed both before and after RbfA during the maturation of 16S rRNA. It has affinity for free ribosomal 30S subunits but not for 70S ribosomes.</text>
</comment>
<comment type="subunit">
    <text evidence="1">Binds ribosomal protein uS19.</text>
</comment>
<comment type="subcellular location">
    <subcellularLocation>
        <location evidence="1">Cytoplasm</location>
    </subcellularLocation>
</comment>
<comment type="domain">
    <text evidence="1">The PRC barrel domain binds ribosomal protein uS19.</text>
</comment>
<comment type="similarity">
    <text evidence="1">Belongs to the RimM family.</text>
</comment>
<name>RIMM_PEDPA</name>
<reference key="1">
    <citation type="journal article" date="2006" name="Proc. Natl. Acad. Sci. U.S.A.">
        <title>Comparative genomics of the lactic acid bacteria.</title>
        <authorList>
            <person name="Makarova K.S."/>
            <person name="Slesarev A."/>
            <person name="Wolf Y.I."/>
            <person name="Sorokin A."/>
            <person name="Mirkin B."/>
            <person name="Koonin E.V."/>
            <person name="Pavlov A."/>
            <person name="Pavlova N."/>
            <person name="Karamychev V."/>
            <person name="Polouchine N."/>
            <person name="Shakhova V."/>
            <person name="Grigoriev I."/>
            <person name="Lou Y."/>
            <person name="Rohksar D."/>
            <person name="Lucas S."/>
            <person name="Huang K."/>
            <person name="Goodstein D.M."/>
            <person name="Hawkins T."/>
            <person name="Plengvidhya V."/>
            <person name="Welker D."/>
            <person name="Hughes J."/>
            <person name="Goh Y."/>
            <person name="Benson A."/>
            <person name="Baldwin K."/>
            <person name="Lee J.-H."/>
            <person name="Diaz-Muniz I."/>
            <person name="Dosti B."/>
            <person name="Smeianov V."/>
            <person name="Wechter W."/>
            <person name="Barabote R."/>
            <person name="Lorca G."/>
            <person name="Altermann E."/>
            <person name="Barrangou R."/>
            <person name="Ganesan B."/>
            <person name="Xie Y."/>
            <person name="Rawsthorne H."/>
            <person name="Tamir D."/>
            <person name="Parker C."/>
            <person name="Breidt F."/>
            <person name="Broadbent J.R."/>
            <person name="Hutkins R."/>
            <person name="O'Sullivan D."/>
            <person name="Steele J."/>
            <person name="Unlu G."/>
            <person name="Saier M.H. Jr."/>
            <person name="Klaenhammer T."/>
            <person name="Richardson P."/>
            <person name="Kozyavkin S."/>
            <person name="Weimer B.C."/>
            <person name="Mills D.A."/>
        </authorList>
    </citation>
    <scope>NUCLEOTIDE SEQUENCE [LARGE SCALE GENOMIC DNA]</scope>
    <source>
        <strain>ATCC 25745 / CCUG 21536 / LMG 10740 / 183-1w</strain>
    </source>
</reference>
<organism>
    <name type="scientific">Pediococcus pentosaceus (strain ATCC 25745 / CCUG 21536 / LMG 10740 / 183-1w)</name>
    <dbReference type="NCBI Taxonomy" id="278197"/>
    <lineage>
        <taxon>Bacteria</taxon>
        <taxon>Bacillati</taxon>
        <taxon>Bacillota</taxon>
        <taxon>Bacilli</taxon>
        <taxon>Lactobacillales</taxon>
        <taxon>Lactobacillaceae</taxon>
        <taxon>Pediococcus</taxon>
    </lineage>
</organism>
<protein>
    <recommendedName>
        <fullName evidence="1">Ribosome maturation factor RimM</fullName>
    </recommendedName>
</protein>
<feature type="chain" id="PRO_1000001209" description="Ribosome maturation factor RimM">
    <location>
        <begin position="1"/>
        <end position="171"/>
    </location>
</feature>
<feature type="domain" description="PRC barrel" evidence="1">
    <location>
        <begin position="98"/>
        <end position="170"/>
    </location>
</feature>
<evidence type="ECO:0000255" key="1">
    <source>
        <dbReference type="HAMAP-Rule" id="MF_00014"/>
    </source>
</evidence>
<keyword id="KW-0143">Chaperone</keyword>
<keyword id="KW-0963">Cytoplasm</keyword>
<keyword id="KW-0690">Ribosome biogenesis</keyword>
<keyword id="KW-0698">rRNA processing</keyword>
<gene>
    <name evidence="1" type="primary">rimM</name>
    <name type="ordered locus">PEPE_0848</name>
</gene>